<sequence length="118" mass="13559">MARVKRGVVARARHKKILKQAKGYYGARSRVYRVAFQAVIKAGQYAYRDRRQRKRQFRQLWIARINAAARQNDMSYSKFINGLKKASIEIDRKILADIAVFDKVAFSALVEKAKAALA</sequence>
<organism>
    <name type="scientific">Yersinia enterocolitica serotype O:8 / biotype 1B (strain NCTC 13174 / 8081)</name>
    <dbReference type="NCBI Taxonomy" id="393305"/>
    <lineage>
        <taxon>Bacteria</taxon>
        <taxon>Pseudomonadati</taxon>
        <taxon>Pseudomonadota</taxon>
        <taxon>Gammaproteobacteria</taxon>
        <taxon>Enterobacterales</taxon>
        <taxon>Yersiniaceae</taxon>
        <taxon>Yersinia</taxon>
    </lineage>
</organism>
<feature type="chain" id="PRO_1000049102" description="Large ribosomal subunit protein bL20">
    <location>
        <begin position="1"/>
        <end position="118"/>
    </location>
</feature>
<proteinExistence type="inferred from homology"/>
<comment type="function">
    <text evidence="1">Binds directly to 23S ribosomal RNA and is necessary for the in vitro assembly process of the 50S ribosomal subunit. It is not involved in the protein synthesizing functions of that subunit.</text>
</comment>
<comment type="similarity">
    <text evidence="1">Belongs to the bacterial ribosomal protein bL20 family.</text>
</comment>
<keyword id="KW-0687">Ribonucleoprotein</keyword>
<keyword id="KW-0689">Ribosomal protein</keyword>
<keyword id="KW-0694">RNA-binding</keyword>
<keyword id="KW-0699">rRNA-binding</keyword>
<gene>
    <name evidence="1" type="primary">rplT</name>
    <name type="ordered locus">YE1915</name>
</gene>
<protein>
    <recommendedName>
        <fullName evidence="1">Large ribosomal subunit protein bL20</fullName>
    </recommendedName>
    <alternativeName>
        <fullName evidence="2">50S ribosomal protein L20</fullName>
    </alternativeName>
</protein>
<evidence type="ECO:0000255" key="1">
    <source>
        <dbReference type="HAMAP-Rule" id="MF_00382"/>
    </source>
</evidence>
<evidence type="ECO:0000305" key="2"/>
<dbReference type="EMBL" id="AM286415">
    <property type="protein sequence ID" value="CAL11995.1"/>
    <property type="molecule type" value="Genomic_DNA"/>
</dbReference>
<dbReference type="RefSeq" id="WP_004393357.1">
    <property type="nucleotide sequence ID" value="NC_008800.1"/>
</dbReference>
<dbReference type="RefSeq" id="YP_001006173.1">
    <property type="nucleotide sequence ID" value="NC_008800.1"/>
</dbReference>
<dbReference type="SMR" id="A1JMK7"/>
<dbReference type="GeneID" id="93972202"/>
<dbReference type="KEGG" id="yen:YE1915"/>
<dbReference type="PATRIC" id="fig|393305.7.peg.2069"/>
<dbReference type="eggNOG" id="COG0292">
    <property type="taxonomic scope" value="Bacteria"/>
</dbReference>
<dbReference type="HOGENOM" id="CLU_123265_0_1_6"/>
<dbReference type="OrthoDB" id="9808966at2"/>
<dbReference type="Proteomes" id="UP000000642">
    <property type="component" value="Chromosome"/>
</dbReference>
<dbReference type="GO" id="GO:1990904">
    <property type="term" value="C:ribonucleoprotein complex"/>
    <property type="evidence" value="ECO:0007669"/>
    <property type="project" value="UniProtKB-KW"/>
</dbReference>
<dbReference type="GO" id="GO:0005840">
    <property type="term" value="C:ribosome"/>
    <property type="evidence" value="ECO:0007669"/>
    <property type="project" value="UniProtKB-KW"/>
</dbReference>
<dbReference type="GO" id="GO:0019843">
    <property type="term" value="F:rRNA binding"/>
    <property type="evidence" value="ECO:0007669"/>
    <property type="project" value="UniProtKB-UniRule"/>
</dbReference>
<dbReference type="GO" id="GO:0003735">
    <property type="term" value="F:structural constituent of ribosome"/>
    <property type="evidence" value="ECO:0007669"/>
    <property type="project" value="InterPro"/>
</dbReference>
<dbReference type="GO" id="GO:0000027">
    <property type="term" value="P:ribosomal large subunit assembly"/>
    <property type="evidence" value="ECO:0007669"/>
    <property type="project" value="UniProtKB-UniRule"/>
</dbReference>
<dbReference type="GO" id="GO:0006412">
    <property type="term" value="P:translation"/>
    <property type="evidence" value="ECO:0007669"/>
    <property type="project" value="InterPro"/>
</dbReference>
<dbReference type="CDD" id="cd07026">
    <property type="entry name" value="Ribosomal_L20"/>
    <property type="match status" value="1"/>
</dbReference>
<dbReference type="FunFam" id="1.10.1900.20:FF:000001">
    <property type="entry name" value="50S ribosomal protein L20"/>
    <property type="match status" value="1"/>
</dbReference>
<dbReference type="Gene3D" id="6.10.160.10">
    <property type="match status" value="1"/>
</dbReference>
<dbReference type="Gene3D" id="1.10.1900.20">
    <property type="entry name" value="Ribosomal protein L20"/>
    <property type="match status" value="1"/>
</dbReference>
<dbReference type="HAMAP" id="MF_00382">
    <property type="entry name" value="Ribosomal_bL20"/>
    <property type="match status" value="1"/>
</dbReference>
<dbReference type="InterPro" id="IPR005813">
    <property type="entry name" value="Ribosomal_bL20"/>
</dbReference>
<dbReference type="InterPro" id="IPR049946">
    <property type="entry name" value="RIBOSOMAL_L20_CS"/>
</dbReference>
<dbReference type="InterPro" id="IPR035566">
    <property type="entry name" value="Ribosomal_protein_bL20_C"/>
</dbReference>
<dbReference type="NCBIfam" id="TIGR01032">
    <property type="entry name" value="rplT_bact"/>
    <property type="match status" value="1"/>
</dbReference>
<dbReference type="PANTHER" id="PTHR10986">
    <property type="entry name" value="39S RIBOSOMAL PROTEIN L20"/>
    <property type="match status" value="1"/>
</dbReference>
<dbReference type="Pfam" id="PF00453">
    <property type="entry name" value="Ribosomal_L20"/>
    <property type="match status" value="1"/>
</dbReference>
<dbReference type="PRINTS" id="PR00062">
    <property type="entry name" value="RIBOSOMALL20"/>
</dbReference>
<dbReference type="SUPFAM" id="SSF74731">
    <property type="entry name" value="Ribosomal protein L20"/>
    <property type="match status" value="1"/>
</dbReference>
<dbReference type="PROSITE" id="PS00937">
    <property type="entry name" value="RIBOSOMAL_L20"/>
    <property type="match status" value="1"/>
</dbReference>
<accession>A1JMK7</accession>
<name>RL20_YERE8</name>
<reference key="1">
    <citation type="journal article" date="2006" name="PLoS Genet.">
        <title>The complete genome sequence and comparative genome analysis of the high pathogenicity Yersinia enterocolitica strain 8081.</title>
        <authorList>
            <person name="Thomson N.R."/>
            <person name="Howard S."/>
            <person name="Wren B.W."/>
            <person name="Holden M.T.G."/>
            <person name="Crossman L."/>
            <person name="Challis G.L."/>
            <person name="Churcher C."/>
            <person name="Mungall K."/>
            <person name="Brooks K."/>
            <person name="Chillingworth T."/>
            <person name="Feltwell T."/>
            <person name="Abdellah Z."/>
            <person name="Hauser H."/>
            <person name="Jagels K."/>
            <person name="Maddison M."/>
            <person name="Moule S."/>
            <person name="Sanders M."/>
            <person name="Whitehead S."/>
            <person name="Quail M.A."/>
            <person name="Dougan G."/>
            <person name="Parkhill J."/>
            <person name="Prentice M.B."/>
        </authorList>
    </citation>
    <scope>NUCLEOTIDE SEQUENCE [LARGE SCALE GENOMIC DNA]</scope>
    <source>
        <strain>NCTC 13174 / 8081</strain>
    </source>
</reference>